<dbReference type="EC" id="6.3.4.2" evidence="1"/>
<dbReference type="EMBL" id="AJ749949">
    <property type="protein sequence ID" value="CAG45007.1"/>
    <property type="molecule type" value="Genomic_DNA"/>
</dbReference>
<dbReference type="RefSeq" id="WP_003020026.1">
    <property type="nucleotide sequence ID" value="NZ_CP010290.1"/>
</dbReference>
<dbReference type="RefSeq" id="YP_169421.1">
    <property type="nucleotide sequence ID" value="NC_006570.2"/>
</dbReference>
<dbReference type="SMR" id="Q5NHS1"/>
<dbReference type="IntAct" id="Q5NHS1">
    <property type="interactions" value="1"/>
</dbReference>
<dbReference type="STRING" id="177416.FTT_0374c"/>
<dbReference type="DNASU" id="3191651"/>
<dbReference type="EnsemblBacteria" id="CAG45007">
    <property type="protein sequence ID" value="CAG45007"/>
    <property type="gene ID" value="FTT_0374c"/>
</dbReference>
<dbReference type="KEGG" id="ftu:FTT_0374c"/>
<dbReference type="eggNOG" id="COG0504">
    <property type="taxonomic scope" value="Bacteria"/>
</dbReference>
<dbReference type="OrthoDB" id="9801107at2"/>
<dbReference type="UniPathway" id="UPA00159">
    <property type="reaction ID" value="UER00277"/>
</dbReference>
<dbReference type="Proteomes" id="UP000001174">
    <property type="component" value="Chromosome"/>
</dbReference>
<dbReference type="GO" id="GO:0005829">
    <property type="term" value="C:cytosol"/>
    <property type="evidence" value="ECO:0007669"/>
    <property type="project" value="TreeGrafter"/>
</dbReference>
<dbReference type="GO" id="GO:0005524">
    <property type="term" value="F:ATP binding"/>
    <property type="evidence" value="ECO:0007669"/>
    <property type="project" value="UniProtKB-KW"/>
</dbReference>
<dbReference type="GO" id="GO:0003883">
    <property type="term" value="F:CTP synthase activity"/>
    <property type="evidence" value="ECO:0007669"/>
    <property type="project" value="UniProtKB-UniRule"/>
</dbReference>
<dbReference type="GO" id="GO:0004359">
    <property type="term" value="F:glutaminase activity"/>
    <property type="evidence" value="ECO:0007669"/>
    <property type="project" value="RHEA"/>
</dbReference>
<dbReference type="GO" id="GO:0042802">
    <property type="term" value="F:identical protein binding"/>
    <property type="evidence" value="ECO:0007669"/>
    <property type="project" value="TreeGrafter"/>
</dbReference>
<dbReference type="GO" id="GO:0046872">
    <property type="term" value="F:metal ion binding"/>
    <property type="evidence" value="ECO:0007669"/>
    <property type="project" value="UniProtKB-KW"/>
</dbReference>
<dbReference type="GO" id="GO:0044210">
    <property type="term" value="P:'de novo' CTP biosynthetic process"/>
    <property type="evidence" value="ECO:0007669"/>
    <property type="project" value="UniProtKB-UniRule"/>
</dbReference>
<dbReference type="GO" id="GO:0019856">
    <property type="term" value="P:pyrimidine nucleobase biosynthetic process"/>
    <property type="evidence" value="ECO:0007669"/>
    <property type="project" value="TreeGrafter"/>
</dbReference>
<dbReference type="CDD" id="cd03113">
    <property type="entry name" value="CTPS_N"/>
    <property type="match status" value="1"/>
</dbReference>
<dbReference type="CDD" id="cd01746">
    <property type="entry name" value="GATase1_CTP_Synthase"/>
    <property type="match status" value="1"/>
</dbReference>
<dbReference type="FunFam" id="3.40.50.300:FF:000009">
    <property type="entry name" value="CTP synthase"/>
    <property type="match status" value="1"/>
</dbReference>
<dbReference type="FunFam" id="3.40.50.880:FF:000002">
    <property type="entry name" value="CTP synthase"/>
    <property type="match status" value="1"/>
</dbReference>
<dbReference type="Gene3D" id="3.40.50.880">
    <property type="match status" value="1"/>
</dbReference>
<dbReference type="Gene3D" id="3.40.50.300">
    <property type="entry name" value="P-loop containing nucleotide triphosphate hydrolases"/>
    <property type="match status" value="1"/>
</dbReference>
<dbReference type="HAMAP" id="MF_01227">
    <property type="entry name" value="PyrG"/>
    <property type="match status" value="1"/>
</dbReference>
<dbReference type="InterPro" id="IPR029062">
    <property type="entry name" value="Class_I_gatase-like"/>
</dbReference>
<dbReference type="InterPro" id="IPR004468">
    <property type="entry name" value="CTP_synthase"/>
</dbReference>
<dbReference type="InterPro" id="IPR017456">
    <property type="entry name" value="CTP_synthase_N"/>
</dbReference>
<dbReference type="InterPro" id="IPR017926">
    <property type="entry name" value="GATASE"/>
</dbReference>
<dbReference type="InterPro" id="IPR033828">
    <property type="entry name" value="GATase1_CTP_Synthase"/>
</dbReference>
<dbReference type="InterPro" id="IPR027417">
    <property type="entry name" value="P-loop_NTPase"/>
</dbReference>
<dbReference type="NCBIfam" id="NF003792">
    <property type="entry name" value="PRK05380.1"/>
    <property type="match status" value="1"/>
</dbReference>
<dbReference type="NCBIfam" id="TIGR00337">
    <property type="entry name" value="PyrG"/>
    <property type="match status" value="1"/>
</dbReference>
<dbReference type="PANTHER" id="PTHR11550">
    <property type="entry name" value="CTP SYNTHASE"/>
    <property type="match status" value="1"/>
</dbReference>
<dbReference type="PANTHER" id="PTHR11550:SF0">
    <property type="entry name" value="CTP SYNTHASE-RELATED"/>
    <property type="match status" value="1"/>
</dbReference>
<dbReference type="Pfam" id="PF06418">
    <property type="entry name" value="CTP_synth_N"/>
    <property type="match status" value="1"/>
</dbReference>
<dbReference type="Pfam" id="PF00117">
    <property type="entry name" value="GATase"/>
    <property type="match status" value="1"/>
</dbReference>
<dbReference type="SUPFAM" id="SSF52317">
    <property type="entry name" value="Class I glutamine amidotransferase-like"/>
    <property type="match status" value="1"/>
</dbReference>
<dbReference type="SUPFAM" id="SSF52540">
    <property type="entry name" value="P-loop containing nucleoside triphosphate hydrolases"/>
    <property type="match status" value="1"/>
</dbReference>
<dbReference type="PROSITE" id="PS51273">
    <property type="entry name" value="GATASE_TYPE_1"/>
    <property type="match status" value="1"/>
</dbReference>
<feature type="chain" id="PRO_0000266121" description="CTP synthase">
    <location>
        <begin position="1"/>
        <end position="546"/>
    </location>
</feature>
<feature type="domain" description="Glutamine amidotransferase type-1" evidence="1">
    <location>
        <begin position="294"/>
        <end position="546"/>
    </location>
</feature>
<feature type="region of interest" description="Amidoligase domain" evidence="1">
    <location>
        <begin position="1"/>
        <end position="269"/>
    </location>
</feature>
<feature type="active site" description="Nucleophile; for glutamine hydrolysis" evidence="1">
    <location>
        <position position="383"/>
    </location>
</feature>
<feature type="active site" evidence="1">
    <location>
        <position position="519"/>
    </location>
</feature>
<feature type="active site" evidence="1">
    <location>
        <position position="521"/>
    </location>
</feature>
<feature type="binding site" evidence="1">
    <location>
        <position position="16"/>
    </location>
    <ligand>
        <name>CTP</name>
        <dbReference type="ChEBI" id="CHEBI:37563"/>
        <note>allosteric inhibitor</note>
    </ligand>
</feature>
<feature type="binding site" evidence="1">
    <location>
        <position position="16"/>
    </location>
    <ligand>
        <name>UTP</name>
        <dbReference type="ChEBI" id="CHEBI:46398"/>
    </ligand>
</feature>
<feature type="binding site" evidence="1">
    <location>
        <begin position="17"/>
        <end position="22"/>
    </location>
    <ligand>
        <name>ATP</name>
        <dbReference type="ChEBI" id="CHEBI:30616"/>
    </ligand>
</feature>
<feature type="binding site" evidence="1">
    <location>
        <position position="74"/>
    </location>
    <ligand>
        <name>ATP</name>
        <dbReference type="ChEBI" id="CHEBI:30616"/>
    </ligand>
</feature>
<feature type="binding site" evidence="1">
    <location>
        <position position="74"/>
    </location>
    <ligand>
        <name>Mg(2+)</name>
        <dbReference type="ChEBI" id="CHEBI:18420"/>
    </ligand>
</feature>
<feature type="binding site" evidence="1">
    <location>
        <position position="143"/>
    </location>
    <ligand>
        <name>Mg(2+)</name>
        <dbReference type="ChEBI" id="CHEBI:18420"/>
    </ligand>
</feature>
<feature type="binding site" evidence="1">
    <location>
        <begin position="150"/>
        <end position="152"/>
    </location>
    <ligand>
        <name>CTP</name>
        <dbReference type="ChEBI" id="CHEBI:37563"/>
        <note>allosteric inhibitor</note>
    </ligand>
</feature>
<feature type="binding site" evidence="1">
    <location>
        <begin position="190"/>
        <end position="195"/>
    </location>
    <ligand>
        <name>CTP</name>
        <dbReference type="ChEBI" id="CHEBI:37563"/>
        <note>allosteric inhibitor</note>
    </ligand>
</feature>
<feature type="binding site" evidence="1">
    <location>
        <begin position="190"/>
        <end position="195"/>
    </location>
    <ligand>
        <name>UTP</name>
        <dbReference type="ChEBI" id="CHEBI:46398"/>
    </ligand>
</feature>
<feature type="binding site" evidence="1">
    <location>
        <position position="226"/>
    </location>
    <ligand>
        <name>CTP</name>
        <dbReference type="ChEBI" id="CHEBI:37563"/>
        <note>allosteric inhibitor</note>
    </ligand>
</feature>
<feature type="binding site" evidence="1">
    <location>
        <position position="226"/>
    </location>
    <ligand>
        <name>UTP</name>
        <dbReference type="ChEBI" id="CHEBI:46398"/>
    </ligand>
</feature>
<feature type="binding site" evidence="1">
    <location>
        <position position="356"/>
    </location>
    <ligand>
        <name>L-glutamine</name>
        <dbReference type="ChEBI" id="CHEBI:58359"/>
    </ligand>
</feature>
<feature type="binding site" evidence="1">
    <location>
        <begin position="384"/>
        <end position="387"/>
    </location>
    <ligand>
        <name>L-glutamine</name>
        <dbReference type="ChEBI" id="CHEBI:58359"/>
    </ligand>
</feature>
<feature type="binding site" evidence="1">
    <location>
        <position position="407"/>
    </location>
    <ligand>
        <name>L-glutamine</name>
        <dbReference type="ChEBI" id="CHEBI:58359"/>
    </ligand>
</feature>
<feature type="binding site" evidence="1">
    <location>
        <position position="474"/>
    </location>
    <ligand>
        <name>L-glutamine</name>
        <dbReference type="ChEBI" id="CHEBI:58359"/>
    </ligand>
</feature>
<keyword id="KW-0067">ATP-binding</keyword>
<keyword id="KW-0315">Glutamine amidotransferase</keyword>
<keyword id="KW-0436">Ligase</keyword>
<keyword id="KW-0460">Magnesium</keyword>
<keyword id="KW-0479">Metal-binding</keyword>
<keyword id="KW-0547">Nucleotide-binding</keyword>
<keyword id="KW-0665">Pyrimidine biosynthesis</keyword>
<keyword id="KW-1185">Reference proteome</keyword>
<organism>
    <name type="scientific">Francisella tularensis subsp. tularensis (strain SCHU S4 / Schu 4)</name>
    <dbReference type="NCBI Taxonomy" id="177416"/>
    <lineage>
        <taxon>Bacteria</taxon>
        <taxon>Pseudomonadati</taxon>
        <taxon>Pseudomonadota</taxon>
        <taxon>Gammaproteobacteria</taxon>
        <taxon>Thiotrichales</taxon>
        <taxon>Francisellaceae</taxon>
        <taxon>Francisella</taxon>
    </lineage>
</organism>
<sequence length="546" mass="61029">MNSNTKIIFVTGGVVSSLGKGVTAASLATLLESRGLNVTMMKLDPYINVDPGTMSPLQHGEVFVTEDGAETDLDLGHYERFIRNKMTQANNFTTGKVYQSVLRRERKGDYLGATIQVIPHITDEIKRRICSGIADDVDVAIVEIGGTVGDIESQPFLEAIRQLRIELGRNRTLFVHLTLLPYIKVAGEIKTKPTQHSVKELRGIGIQADVLVCRCEKKFDDSEKRKIALFTNVDQDCIFTAEDVDTIYEVPLKYNQQGFDAKLVELLNLNAKEADLSEWQNVVNTIRDVKGEVTIAMVGKYVSLTEAYKSLNEALYNAGYKKGVKVKIKFVDSEDVNENNVESYFKDVAAILVPGGFGSRGVEGKIISIKYARENQIPFLGICLGMQLAVIEYARNILGIKDAHSSELEPTTANPVIGLITEWQAEDGTVHQRTHSSDLGGTMRLGGYKCVLKQGSRAREIYQADEVVERHRHRYEVNSNYVERLEEAGLIFSGRSEDNKLMELIEIPQHKWFIACQAHPEFTSTPRYGHKLFESYIQAAIENSNN</sequence>
<comment type="function">
    <text evidence="1">Catalyzes the ATP-dependent amination of UTP to CTP with either L-glutamine or ammonia as the source of nitrogen. Regulates intracellular CTP levels through interactions with the four ribonucleotide triphosphates.</text>
</comment>
<comment type="catalytic activity">
    <reaction evidence="1">
        <text>UTP + L-glutamine + ATP + H2O = CTP + L-glutamate + ADP + phosphate + 2 H(+)</text>
        <dbReference type="Rhea" id="RHEA:26426"/>
        <dbReference type="ChEBI" id="CHEBI:15377"/>
        <dbReference type="ChEBI" id="CHEBI:15378"/>
        <dbReference type="ChEBI" id="CHEBI:29985"/>
        <dbReference type="ChEBI" id="CHEBI:30616"/>
        <dbReference type="ChEBI" id="CHEBI:37563"/>
        <dbReference type="ChEBI" id="CHEBI:43474"/>
        <dbReference type="ChEBI" id="CHEBI:46398"/>
        <dbReference type="ChEBI" id="CHEBI:58359"/>
        <dbReference type="ChEBI" id="CHEBI:456216"/>
        <dbReference type="EC" id="6.3.4.2"/>
    </reaction>
</comment>
<comment type="catalytic activity">
    <reaction evidence="1">
        <text>L-glutamine + H2O = L-glutamate + NH4(+)</text>
        <dbReference type="Rhea" id="RHEA:15889"/>
        <dbReference type="ChEBI" id="CHEBI:15377"/>
        <dbReference type="ChEBI" id="CHEBI:28938"/>
        <dbReference type="ChEBI" id="CHEBI:29985"/>
        <dbReference type="ChEBI" id="CHEBI:58359"/>
    </reaction>
</comment>
<comment type="catalytic activity">
    <reaction evidence="1">
        <text>UTP + NH4(+) + ATP = CTP + ADP + phosphate + 2 H(+)</text>
        <dbReference type="Rhea" id="RHEA:16597"/>
        <dbReference type="ChEBI" id="CHEBI:15378"/>
        <dbReference type="ChEBI" id="CHEBI:28938"/>
        <dbReference type="ChEBI" id="CHEBI:30616"/>
        <dbReference type="ChEBI" id="CHEBI:37563"/>
        <dbReference type="ChEBI" id="CHEBI:43474"/>
        <dbReference type="ChEBI" id="CHEBI:46398"/>
        <dbReference type="ChEBI" id="CHEBI:456216"/>
    </reaction>
</comment>
<comment type="activity regulation">
    <text evidence="1">Allosterically activated by GTP, when glutamine is the substrate; GTP has no effect on the reaction when ammonia is the substrate. The allosteric effector GTP functions by stabilizing the protein conformation that binds the tetrahedral intermediate(s) formed during glutamine hydrolysis. Inhibited by the product CTP, via allosteric rather than competitive inhibition.</text>
</comment>
<comment type="pathway">
    <text evidence="1">Pyrimidine metabolism; CTP biosynthesis via de novo pathway; CTP from UDP: step 2/2.</text>
</comment>
<comment type="subunit">
    <text evidence="1">Homotetramer.</text>
</comment>
<comment type="miscellaneous">
    <text evidence="1">CTPSs have evolved a hybrid strategy for distinguishing between UTP and CTP. The overlapping regions of the product feedback inhibitory and substrate sites recognize a common feature in both compounds, the triphosphate moiety. To differentiate isosteric substrate and product pyrimidine rings, an additional pocket far from the expected kinase/ligase catalytic site, specifically recognizes the cytosine and ribose portions of the product inhibitor.</text>
</comment>
<comment type="similarity">
    <text evidence="1">Belongs to the CTP synthase family.</text>
</comment>
<protein>
    <recommendedName>
        <fullName evidence="1">CTP synthase</fullName>
        <ecNumber evidence="1">6.3.4.2</ecNumber>
    </recommendedName>
    <alternativeName>
        <fullName evidence="1">Cytidine 5'-triphosphate synthase</fullName>
    </alternativeName>
    <alternativeName>
        <fullName evidence="1">Cytidine triphosphate synthetase</fullName>
        <shortName evidence="1">CTP synthetase</shortName>
        <shortName evidence="1">CTPS</shortName>
    </alternativeName>
    <alternativeName>
        <fullName evidence="1">UTP--ammonia ligase</fullName>
    </alternativeName>
</protein>
<accession>Q5NHS1</accession>
<gene>
    <name evidence="1" type="primary">pyrG</name>
    <name type="ordered locus">FTT_0374c</name>
</gene>
<name>PYRG_FRATT</name>
<reference key="1">
    <citation type="journal article" date="2005" name="Nat. Genet.">
        <title>The complete genome sequence of Francisella tularensis, the causative agent of tularemia.</title>
        <authorList>
            <person name="Larsson P."/>
            <person name="Oyston P.C.F."/>
            <person name="Chain P."/>
            <person name="Chu M.C."/>
            <person name="Duffield M."/>
            <person name="Fuxelius H.-H."/>
            <person name="Garcia E."/>
            <person name="Haelltorp G."/>
            <person name="Johansson D."/>
            <person name="Isherwood K.E."/>
            <person name="Karp P.D."/>
            <person name="Larsson E."/>
            <person name="Liu Y."/>
            <person name="Michell S."/>
            <person name="Prior J."/>
            <person name="Prior R."/>
            <person name="Malfatti S."/>
            <person name="Sjoestedt A."/>
            <person name="Svensson K."/>
            <person name="Thompson N."/>
            <person name="Vergez L."/>
            <person name="Wagg J.K."/>
            <person name="Wren B.W."/>
            <person name="Lindler L.E."/>
            <person name="Andersson S.G.E."/>
            <person name="Forsman M."/>
            <person name="Titball R.W."/>
        </authorList>
    </citation>
    <scope>NUCLEOTIDE SEQUENCE [LARGE SCALE GENOMIC DNA]</scope>
    <source>
        <strain>SCHU S4 / Schu 4</strain>
    </source>
</reference>
<proteinExistence type="inferred from homology"/>
<evidence type="ECO:0000255" key="1">
    <source>
        <dbReference type="HAMAP-Rule" id="MF_01227"/>
    </source>
</evidence>